<protein>
    <recommendedName>
        <fullName evidence="1">Thiol:disulfide interchange protein DsbD</fullName>
        <ecNumber evidence="1">1.8.1.8</ecNumber>
    </recommendedName>
    <alternativeName>
        <fullName evidence="1">Protein-disulfide reductase</fullName>
        <shortName evidence="1">Disulfide reductase</shortName>
    </alternativeName>
</protein>
<gene>
    <name evidence="1" type="primary">dsbD</name>
    <name type="ordered locus">plu4139</name>
</gene>
<name>DSBD_PHOLL</name>
<organism>
    <name type="scientific">Photorhabdus laumondii subsp. laumondii (strain DSM 15139 / CIP 105565 / TT01)</name>
    <name type="common">Photorhabdus luminescens subsp. laumondii</name>
    <dbReference type="NCBI Taxonomy" id="243265"/>
    <lineage>
        <taxon>Bacteria</taxon>
        <taxon>Pseudomonadati</taxon>
        <taxon>Pseudomonadota</taxon>
        <taxon>Gammaproteobacteria</taxon>
        <taxon>Enterobacterales</taxon>
        <taxon>Morganellaceae</taxon>
        <taxon>Photorhabdus</taxon>
    </lineage>
</organism>
<dbReference type="EC" id="1.8.1.8" evidence="1"/>
<dbReference type="EMBL" id="BX571872">
    <property type="protein sequence ID" value="CAE16511.1"/>
    <property type="molecule type" value="Genomic_DNA"/>
</dbReference>
<dbReference type="RefSeq" id="WP_011148255.1">
    <property type="nucleotide sequence ID" value="NC_005126.1"/>
</dbReference>
<dbReference type="SMR" id="Q7MZX2"/>
<dbReference type="STRING" id="243265.plu4139"/>
<dbReference type="GeneID" id="48850356"/>
<dbReference type="KEGG" id="plu:plu4139"/>
<dbReference type="eggNOG" id="COG4232">
    <property type="taxonomic scope" value="Bacteria"/>
</dbReference>
<dbReference type="HOGENOM" id="CLU_014657_3_0_6"/>
<dbReference type="OrthoDB" id="9811036at2"/>
<dbReference type="Proteomes" id="UP000002514">
    <property type="component" value="Chromosome"/>
</dbReference>
<dbReference type="GO" id="GO:0005886">
    <property type="term" value="C:plasma membrane"/>
    <property type="evidence" value="ECO:0007669"/>
    <property type="project" value="UniProtKB-SubCell"/>
</dbReference>
<dbReference type="GO" id="GO:0009055">
    <property type="term" value="F:electron transfer activity"/>
    <property type="evidence" value="ECO:0007669"/>
    <property type="project" value="UniProtKB-UniRule"/>
</dbReference>
<dbReference type="GO" id="GO:0047134">
    <property type="term" value="F:protein-disulfide reductase [NAD(P)H] activity"/>
    <property type="evidence" value="ECO:0007669"/>
    <property type="project" value="UniProtKB-UniRule"/>
</dbReference>
<dbReference type="GO" id="GO:0045454">
    <property type="term" value="P:cell redox homeostasis"/>
    <property type="evidence" value="ECO:0007669"/>
    <property type="project" value="TreeGrafter"/>
</dbReference>
<dbReference type="GO" id="GO:0017004">
    <property type="term" value="P:cytochrome complex assembly"/>
    <property type="evidence" value="ECO:0007669"/>
    <property type="project" value="UniProtKB-UniRule"/>
</dbReference>
<dbReference type="CDD" id="cd02953">
    <property type="entry name" value="DsbDgamma"/>
    <property type="match status" value="1"/>
</dbReference>
<dbReference type="FunFam" id="3.40.30.10:FF:000116">
    <property type="entry name" value="Thiol:disulfide interchange protein DsbD"/>
    <property type="match status" value="1"/>
</dbReference>
<dbReference type="Gene3D" id="3.40.30.10">
    <property type="entry name" value="Glutaredoxin"/>
    <property type="match status" value="1"/>
</dbReference>
<dbReference type="Gene3D" id="2.60.40.1250">
    <property type="entry name" value="Thiol:disulfide interchange protein DsbD, N-terminal domain"/>
    <property type="match status" value="1"/>
</dbReference>
<dbReference type="HAMAP" id="MF_00399">
    <property type="entry name" value="DbsD"/>
    <property type="match status" value="1"/>
</dbReference>
<dbReference type="InterPro" id="IPR003834">
    <property type="entry name" value="Cyt_c_assmbl_TM_dom"/>
</dbReference>
<dbReference type="InterPro" id="IPR035671">
    <property type="entry name" value="DsbD_gamma"/>
</dbReference>
<dbReference type="InterPro" id="IPR028250">
    <property type="entry name" value="DsbDN"/>
</dbReference>
<dbReference type="InterPro" id="IPR036929">
    <property type="entry name" value="DsbDN_sf"/>
</dbReference>
<dbReference type="InterPro" id="IPR022910">
    <property type="entry name" value="Thiol_diS_interchange_DbsD"/>
</dbReference>
<dbReference type="InterPro" id="IPR012336">
    <property type="entry name" value="Thioredoxin-like_fold"/>
</dbReference>
<dbReference type="InterPro" id="IPR036249">
    <property type="entry name" value="Thioredoxin-like_sf"/>
</dbReference>
<dbReference type="InterPro" id="IPR017937">
    <property type="entry name" value="Thioredoxin_CS"/>
</dbReference>
<dbReference type="InterPro" id="IPR013766">
    <property type="entry name" value="Thioredoxin_domain"/>
</dbReference>
<dbReference type="NCBIfam" id="NF001419">
    <property type="entry name" value="PRK00293.1"/>
    <property type="match status" value="1"/>
</dbReference>
<dbReference type="PANTHER" id="PTHR32234">
    <property type="entry name" value="THIOL:DISULFIDE INTERCHANGE PROTEIN DSBD"/>
    <property type="match status" value="1"/>
</dbReference>
<dbReference type="PANTHER" id="PTHR32234:SF0">
    <property type="entry name" value="THIOL:DISULFIDE INTERCHANGE PROTEIN DSBD"/>
    <property type="match status" value="1"/>
</dbReference>
<dbReference type="Pfam" id="PF11412">
    <property type="entry name" value="DsbD_N"/>
    <property type="match status" value="1"/>
</dbReference>
<dbReference type="Pfam" id="PF02683">
    <property type="entry name" value="DsbD_TM"/>
    <property type="match status" value="1"/>
</dbReference>
<dbReference type="Pfam" id="PF13098">
    <property type="entry name" value="Thioredoxin_2"/>
    <property type="match status" value="1"/>
</dbReference>
<dbReference type="SUPFAM" id="SSF74863">
    <property type="entry name" value="Thiol:disulfide interchange protein DsbD, N-terminal domain (DsbD-alpha)"/>
    <property type="match status" value="1"/>
</dbReference>
<dbReference type="SUPFAM" id="SSF52833">
    <property type="entry name" value="Thioredoxin-like"/>
    <property type="match status" value="1"/>
</dbReference>
<dbReference type="PROSITE" id="PS00194">
    <property type="entry name" value="THIOREDOXIN_1"/>
    <property type="match status" value="1"/>
</dbReference>
<dbReference type="PROSITE" id="PS51352">
    <property type="entry name" value="THIOREDOXIN_2"/>
    <property type="match status" value="1"/>
</dbReference>
<proteinExistence type="inferred from homology"/>
<evidence type="ECO:0000255" key="1">
    <source>
        <dbReference type="HAMAP-Rule" id="MF_00399"/>
    </source>
</evidence>
<sequence>MIKRTLMLFLLLCSPLLTPAAANALFEQPGQNPYLPVDQAFMFDFQQKGDKLTLDWQIKPGYYLYHKQLHIEPQQATLGKITLPQGTAHRDEFFGETEVYFQQLIVNVPVTKANNNSNIVVTYQGCAAAGYCYPPETRLVPLSAVIPSKTTDAISAEPVHKTPESASNDQQHLPFSPLWAILIGIGIAFTPCVLPMYPLISSIILGSQRPKSLKQIFWLALSYVQGMAVTYTLLGLIVAAAGLQFQAALQHPYVLIGLSVLFILLALSMFGLYSLQLPSAVQTRLVNWSNQQKNGSLFGVFAMGALAGLICSPCTTAPLSAILLYIAQSGNTVAGGLTLYLYALGMGLPLIAVTLFGHKLLPRSGPWMQYVKEAFGFIILALPVFLLERVIGDAWGIRLWSLLAVSFLGWGFVLTIRSQNGWVRVIQLILLILMLIATRPLQDWFWGTTVTQQSQHSLNFRQINNWQELEQIMTQNSHKTVMLDFYADWCTACKEFEKYTFSDPQVQSQLGDTLLLQANVTNNSPQQKQLLEKLSVRGLPTILFFDSQGKEIPDSRVNGFMDATRFNEHLQHLPK</sequence>
<reference key="1">
    <citation type="journal article" date="2003" name="Nat. Biotechnol.">
        <title>The genome sequence of the entomopathogenic bacterium Photorhabdus luminescens.</title>
        <authorList>
            <person name="Duchaud E."/>
            <person name="Rusniok C."/>
            <person name="Frangeul L."/>
            <person name="Buchrieser C."/>
            <person name="Givaudan A."/>
            <person name="Taourit S."/>
            <person name="Bocs S."/>
            <person name="Boursaux-Eude C."/>
            <person name="Chandler M."/>
            <person name="Charles J.-F."/>
            <person name="Dassa E."/>
            <person name="Derose R."/>
            <person name="Derzelle S."/>
            <person name="Freyssinet G."/>
            <person name="Gaudriault S."/>
            <person name="Medigue C."/>
            <person name="Lanois A."/>
            <person name="Powell K."/>
            <person name="Siguier P."/>
            <person name="Vincent R."/>
            <person name="Wingate V."/>
            <person name="Zouine M."/>
            <person name="Glaser P."/>
            <person name="Boemare N."/>
            <person name="Danchin A."/>
            <person name="Kunst F."/>
        </authorList>
    </citation>
    <scope>NUCLEOTIDE SEQUENCE [LARGE SCALE GENOMIC DNA]</scope>
    <source>
        <strain>DSM 15139 / CIP 105565 / TT01</strain>
    </source>
</reference>
<accession>Q7MZX2</accession>
<keyword id="KW-0997">Cell inner membrane</keyword>
<keyword id="KW-1003">Cell membrane</keyword>
<keyword id="KW-0201">Cytochrome c-type biogenesis</keyword>
<keyword id="KW-1015">Disulfide bond</keyword>
<keyword id="KW-0249">Electron transport</keyword>
<keyword id="KW-0472">Membrane</keyword>
<keyword id="KW-0520">NAD</keyword>
<keyword id="KW-0560">Oxidoreductase</keyword>
<keyword id="KW-0676">Redox-active center</keyword>
<keyword id="KW-1185">Reference proteome</keyword>
<keyword id="KW-0732">Signal</keyword>
<keyword id="KW-0812">Transmembrane</keyword>
<keyword id="KW-1133">Transmembrane helix</keyword>
<keyword id="KW-0813">Transport</keyword>
<comment type="function">
    <text evidence="1">Required to facilitate the formation of correct disulfide bonds in some periplasmic proteins and for the assembly of the periplasmic c-type cytochromes. Acts by transferring electrons from cytoplasmic thioredoxin to the periplasm. This transfer involves a cascade of disulfide bond formation and reduction steps.</text>
</comment>
<comment type="catalytic activity">
    <reaction evidence="1">
        <text>[protein]-dithiol + NAD(+) = [protein]-disulfide + NADH + H(+)</text>
        <dbReference type="Rhea" id="RHEA:18749"/>
        <dbReference type="Rhea" id="RHEA-COMP:10593"/>
        <dbReference type="Rhea" id="RHEA-COMP:10594"/>
        <dbReference type="ChEBI" id="CHEBI:15378"/>
        <dbReference type="ChEBI" id="CHEBI:29950"/>
        <dbReference type="ChEBI" id="CHEBI:50058"/>
        <dbReference type="ChEBI" id="CHEBI:57540"/>
        <dbReference type="ChEBI" id="CHEBI:57945"/>
        <dbReference type="EC" id="1.8.1.8"/>
    </reaction>
</comment>
<comment type="catalytic activity">
    <reaction evidence="1">
        <text>[protein]-dithiol + NADP(+) = [protein]-disulfide + NADPH + H(+)</text>
        <dbReference type="Rhea" id="RHEA:18753"/>
        <dbReference type="Rhea" id="RHEA-COMP:10593"/>
        <dbReference type="Rhea" id="RHEA-COMP:10594"/>
        <dbReference type="ChEBI" id="CHEBI:15378"/>
        <dbReference type="ChEBI" id="CHEBI:29950"/>
        <dbReference type="ChEBI" id="CHEBI:50058"/>
        <dbReference type="ChEBI" id="CHEBI:57783"/>
        <dbReference type="ChEBI" id="CHEBI:58349"/>
        <dbReference type="EC" id="1.8.1.8"/>
    </reaction>
</comment>
<comment type="subcellular location">
    <subcellularLocation>
        <location evidence="1">Cell inner membrane</location>
        <topology evidence="1">Multi-pass membrane protein</topology>
    </subcellularLocation>
</comment>
<comment type="similarity">
    <text evidence="1">Belongs to the thioredoxin family. DsbD subfamily.</text>
</comment>
<feature type="signal peptide" evidence="1">
    <location>
        <begin position="1"/>
        <end position="24"/>
    </location>
</feature>
<feature type="chain" id="PRO_0000304391" description="Thiol:disulfide interchange protein DsbD">
    <location>
        <begin position="25"/>
        <end position="575"/>
    </location>
</feature>
<feature type="transmembrane region" description="Helical" evidence="1">
    <location>
        <begin position="180"/>
        <end position="200"/>
    </location>
</feature>
<feature type="transmembrane region" description="Helical" evidence="1">
    <location>
        <begin position="216"/>
        <end position="236"/>
    </location>
</feature>
<feature type="transmembrane region" description="Helical" evidence="1">
    <location>
        <begin position="253"/>
        <end position="273"/>
    </location>
</feature>
<feature type="transmembrane region" description="Helical" evidence="1">
    <location>
        <begin position="297"/>
        <end position="317"/>
    </location>
</feature>
<feature type="transmembrane region" description="Helical" evidence="1">
    <location>
        <begin position="336"/>
        <end position="356"/>
    </location>
</feature>
<feature type="transmembrane region" description="Helical" evidence="1">
    <location>
        <begin position="367"/>
        <end position="387"/>
    </location>
</feature>
<feature type="transmembrane region" description="Helical" evidence="1">
    <location>
        <begin position="394"/>
        <end position="414"/>
    </location>
</feature>
<feature type="transmembrane region" description="Helical" evidence="1">
    <location>
        <begin position="425"/>
        <end position="445"/>
    </location>
</feature>
<feature type="domain" description="Thioredoxin" evidence="1">
    <location>
        <begin position="444"/>
        <end position="575"/>
    </location>
</feature>
<feature type="disulfide bond" description="Redox-active" evidence="1">
    <location>
        <begin position="126"/>
        <end position="132"/>
    </location>
</feature>
<feature type="disulfide bond" description="Redox-active" evidence="1">
    <location>
        <begin position="192"/>
        <end position="314"/>
    </location>
</feature>
<feature type="disulfide bond" description="Redox-active" evidence="1">
    <location>
        <begin position="490"/>
        <end position="493"/>
    </location>
</feature>